<name>Y1058_AGRFC</name>
<keyword id="KW-0997">Cell inner membrane</keyword>
<keyword id="KW-1003">Cell membrane</keyword>
<keyword id="KW-0472">Membrane</keyword>
<keyword id="KW-1185">Reference proteome</keyword>
<keyword id="KW-0812">Transmembrane</keyword>
<keyword id="KW-1133">Transmembrane helix</keyword>
<gene>
    <name type="ordered locus">Atu1058</name>
    <name type="ORF">AGR_C_1952</name>
</gene>
<feature type="chain" id="PRO_0000162323" description="UPF0060 membrane protein Atu1058">
    <location>
        <begin position="1"/>
        <end position="107"/>
    </location>
</feature>
<feature type="transmembrane region" description="Helical" evidence="1">
    <location>
        <begin position="5"/>
        <end position="25"/>
    </location>
</feature>
<feature type="transmembrane region" description="Helical" evidence="1">
    <location>
        <begin position="32"/>
        <end position="52"/>
    </location>
</feature>
<feature type="transmembrane region" description="Helical" evidence="1">
    <location>
        <begin position="59"/>
        <end position="79"/>
    </location>
</feature>
<feature type="transmembrane region" description="Helical" evidence="1">
    <location>
        <begin position="85"/>
        <end position="105"/>
    </location>
</feature>
<protein>
    <recommendedName>
        <fullName evidence="1">UPF0060 membrane protein Atu1058</fullName>
    </recommendedName>
</protein>
<sequence>MKVYLIYVLAAVAEIAGCFSFWAWLKLGKTGWILLPGMVALAAFAWLLTLVATEAAGRAYAAYGGIYIAASLFWLWGVEGHAPDRWDIAGGVVCLAGTAIILFGPRG</sequence>
<proteinExistence type="inferred from homology"/>
<accession>Q8UGH9</accession>
<evidence type="ECO:0000255" key="1">
    <source>
        <dbReference type="HAMAP-Rule" id="MF_00010"/>
    </source>
</evidence>
<comment type="subcellular location">
    <subcellularLocation>
        <location evidence="1">Cell inner membrane</location>
        <topology evidence="1">Multi-pass membrane protein</topology>
    </subcellularLocation>
</comment>
<comment type="similarity">
    <text evidence="1">Belongs to the UPF0060 family.</text>
</comment>
<reference key="1">
    <citation type="journal article" date="2001" name="Science">
        <title>The genome of the natural genetic engineer Agrobacterium tumefaciens C58.</title>
        <authorList>
            <person name="Wood D.W."/>
            <person name="Setubal J.C."/>
            <person name="Kaul R."/>
            <person name="Monks D.E."/>
            <person name="Kitajima J.P."/>
            <person name="Okura V.K."/>
            <person name="Zhou Y."/>
            <person name="Chen L."/>
            <person name="Wood G.E."/>
            <person name="Almeida N.F. Jr."/>
            <person name="Woo L."/>
            <person name="Chen Y."/>
            <person name="Paulsen I.T."/>
            <person name="Eisen J.A."/>
            <person name="Karp P.D."/>
            <person name="Bovee D. Sr."/>
            <person name="Chapman P."/>
            <person name="Clendenning J."/>
            <person name="Deatherage G."/>
            <person name="Gillet W."/>
            <person name="Grant C."/>
            <person name="Kutyavin T."/>
            <person name="Levy R."/>
            <person name="Li M.-J."/>
            <person name="McClelland E."/>
            <person name="Palmieri A."/>
            <person name="Raymond C."/>
            <person name="Rouse G."/>
            <person name="Saenphimmachak C."/>
            <person name="Wu Z."/>
            <person name="Romero P."/>
            <person name="Gordon D."/>
            <person name="Zhang S."/>
            <person name="Yoo H."/>
            <person name="Tao Y."/>
            <person name="Biddle P."/>
            <person name="Jung M."/>
            <person name="Krespan W."/>
            <person name="Perry M."/>
            <person name="Gordon-Kamm B."/>
            <person name="Liao L."/>
            <person name="Kim S."/>
            <person name="Hendrick C."/>
            <person name="Zhao Z.-Y."/>
            <person name="Dolan M."/>
            <person name="Chumley F."/>
            <person name="Tingey S.V."/>
            <person name="Tomb J.-F."/>
            <person name="Gordon M.P."/>
            <person name="Olson M.V."/>
            <person name="Nester E.W."/>
        </authorList>
    </citation>
    <scope>NUCLEOTIDE SEQUENCE [LARGE SCALE GENOMIC DNA]</scope>
    <source>
        <strain>C58 / ATCC 33970</strain>
    </source>
</reference>
<reference key="2">
    <citation type="journal article" date="2001" name="Science">
        <title>Genome sequence of the plant pathogen and biotechnology agent Agrobacterium tumefaciens C58.</title>
        <authorList>
            <person name="Goodner B."/>
            <person name="Hinkle G."/>
            <person name="Gattung S."/>
            <person name="Miller N."/>
            <person name="Blanchard M."/>
            <person name="Qurollo B."/>
            <person name="Goldman B.S."/>
            <person name="Cao Y."/>
            <person name="Askenazi M."/>
            <person name="Halling C."/>
            <person name="Mullin L."/>
            <person name="Houmiel K."/>
            <person name="Gordon J."/>
            <person name="Vaudin M."/>
            <person name="Iartchouk O."/>
            <person name="Epp A."/>
            <person name="Liu F."/>
            <person name="Wollam C."/>
            <person name="Allinger M."/>
            <person name="Doughty D."/>
            <person name="Scott C."/>
            <person name="Lappas C."/>
            <person name="Markelz B."/>
            <person name="Flanagan C."/>
            <person name="Crowell C."/>
            <person name="Gurson J."/>
            <person name="Lomo C."/>
            <person name="Sear C."/>
            <person name="Strub G."/>
            <person name="Cielo C."/>
            <person name="Slater S."/>
        </authorList>
    </citation>
    <scope>NUCLEOTIDE SEQUENCE [LARGE SCALE GENOMIC DNA]</scope>
    <source>
        <strain>C58 / ATCC 33970</strain>
    </source>
</reference>
<dbReference type="EMBL" id="AE007869">
    <property type="protein sequence ID" value="AAK86866.2"/>
    <property type="molecule type" value="Genomic_DNA"/>
</dbReference>
<dbReference type="PIR" id="A97489">
    <property type="entry name" value="A97489"/>
</dbReference>
<dbReference type="PIR" id="AI2706">
    <property type="entry name" value="AI2706"/>
</dbReference>
<dbReference type="RefSeq" id="NP_354081.2">
    <property type="nucleotide sequence ID" value="NC_003062.2"/>
</dbReference>
<dbReference type="RefSeq" id="WP_010971365.1">
    <property type="nucleotide sequence ID" value="NC_003062.2"/>
</dbReference>
<dbReference type="SMR" id="Q8UGH9"/>
<dbReference type="STRING" id="176299.Atu1058"/>
<dbReference type="DNASU" id="1133096"/>
<dbReference type="EnsemblBacteria" id="AAK86866">
    <property type="protein sequence ID" value="AAK86866"/>
    <property type="gene ID" value="Atu1058"/>
</dbReference>
<dbReference type="GeneID" id="1133096"/>
<dbReference type="KEGG" id="atu:Atu1058"/>
<dbReference type="PATRIC" id="fig|176299.10.peg.1070"/>
<dbReference type="eggNOG" id="COG1742">
    <property type="taxonomic scope" value="Bacteria"/>
</dbReference>
<dbReference type="HOGENOM" id="CLU_117653_2_0_5"/>
<dbReference type="OrthoDB" id="123240at2"/>
<dbReference type="PhylomeDB" id="Q8UGH9"/>
<dbReference type="BioCyc" id="AGRO:ATU1058-MONOMER"/>
<dbReference type="Proteomes" id="UP000000813">
    <property type="component" value="Chromosome circular"/>
</dbReference>
<dbReference type="GO" id="GO:0005886">
    <property type="term" value="C:plasma membrane"/>
    <property type="evidence" value="ECO:0007669"/>
    <property type="project" value="UniProtKB-SubCell"/>
</dbReference>
<dbReference type="HAMAP" id="MF_00010">
    <property type="entry name" value="UPF0060"/>
    <property type="match status" value="1"/>
</dbReference>
<dbReference type="InterPro" id="IPR003844">
    <property type="entry name" value="UPF0060"/>
</dbReference>
<dbReference type="NCBIfam" id="NF002586">
    <property type="entry name" value="PRK02237.1"/>
    <property type="match status" value="1"/>
</dbReference>
<dbReference type="PANTHER" id="PTHR36116">
    <property type="entry name" value="UPF0060 MEMBRANE PROTEIN YNFA"/>
    <property type="match status" value="1"/>
</dbReference>
<dbReference type="PANTHER" id="PTHR36116:SF1">
    <property type="entry name" value="UPF0060 MEMBRANE PROTEIN YNFA"/>
    <property type="match status" value="1"/>
</dbReference>
<dbReference type="Pfam" id="PF02694">
    <property type="entry name" value="UPF0060"/>
    <property type="match status" value="1"/>
</dbReference>
<dbReference type="SUPFAM" id="SSF103481">
    <property type="entry name" value="Multidrug resistance efflux transporter EmrE"/>
    <property type="match status" value="1"/>
</dbReference>
<organism>
    <name type="scientific">Agrobacterium fabrum (strain C58 / ATCC 33970)</name>
    <name type="common">Agrobacterium tumefaciens (strain C58)</name>
    <dbReference type="NCBI Taxonomy" id="176299"/>
    <lineage>
        <taxon>Bacteria</taxon>
        <taxon>Pseudomonadati</taxon>
        <taxon>Pseudomonadota</taxon>
        <taxon>Alphaproteobacteria</taxon>
        <taxon>Hyphomicrobiales</taxon>
        <taxon>Rhizobiaceae</taxon>
        <taxon>Rhizobium/Agrobacterium group</taxon>
        <taxon>Agrobacterium</taxon>
        <taxon>Agrobacterium tumefaciens complex</taxon>
    </lineage>
</organism>